<accession>Q750C9</accession>
<sequence length="107" mass="12532">MMAADDTMSSKRADNCYKKDRGTMVYTPTDAQQATGKVHEKVYKFFESLYWMYYIHLPYYLMTSFDSFCLHVFFLVVFTLSLFGLLKWVLSLYWATVGYMAYAATGQ</sequence>
<proteinExistence type="inferred from homology"/>
<reference key="1">
    <citation type="journal article" date="2004" name="Science">
        <title>The Ashbya gossypii genome as a tool for mapping the ancient Saccharomyces cerevisiae genome.</title>
        <authorList>
            <person name="Dietrich F.S."/>
            <person name="Voegeli S."/>
            <person name="Brachat S."/>
            <person name="Lerch A."/>
            <person name="Gates K."/>
            <person name="Steiner S."/>
            <person name="Mohr C."/>
            <person name="Poehlmann R."/>
            <person name="Luedi P."/>
            <person name="Choi S."/>
            <person name="Wing R.A."/>
            <person name="Flavier A."/>
            <person name="Gaffney T.D."/>
            <person name="Philippsen P."/>
        </authorList>
    </citation>
    <scope>NUCLEOTIDE SEQUENCE [LARGE SCALE GENOMIC DNA]</scope>
    <source>
        <strain>ATCC 10895 / CBS 109.51 / FGSC 9923 / NRRL Y-1056</strain>
    </source>
</reference>
<reference key="2">
    <citation type="journal article" date="2013" name="G3 (Bethesda)">
        <title>Genomes of Ashbya fungi isolated from insects reveal four mating-type loci, numerous translocations, lack of transposons, and distinct gene duplications.</title>
        <authorList>
            <person name="Dietrich F.S."/>
            <person name="Voegeli S."/>
            <person name="Kuo S."/>
            <person name="Philippsen P."/>
        </authorList>
    </citation>
    <scope>GENOME REANNOTATION</scope>
    <source>
        <strain>ATCC 10895 / CBS 109.51 / FGSC 9923 / NRRL Y-1056</strain>
    </source>
</reference>
<keyword id="KW-0256">Endoplasmic reticulum</keyword>
<keyword id="KW-0472">Membrane</keyword>
<keyword id="KW-1185">Reference proteome</keyword>
<keyword id="KW-0812">Transmembrane</keyword>
<keyword id="KW-1133">Transmembrane helix</keyword>
<dbReference type="EMBL" id="AE016820">
    <property type="protein sequence ID" value="AAS54515.1"/>
    <property type="molecule type" value="Genomic_DNA"/>
</dbReference>
<dbReference type="RefSeq" id="NP_986691.1">
    <property type="nucleotide sequence ID" value="NM_211753.1"/>
</dbReference>
<dbReference type="SMR" id="Q750C9"/>
<dbReference type="FunCoup" id="Q750C9">
    <property type="interactions" value="6"/>
</dbReference>
<dbReference type="STRING" id="284811.Q750C9"/>
<dbReference type="EnsemblFungi" id="AAS54515">
    <property type="protein sequence ID" value="AAS54515"/>
    <property type="gene ID" value="AGOS_AGR026C"/>
</dbReference>
<dbReference type="GeneID" id="4622990"/>
<dbReference type="KEGG" id="ago:AGOS_AGR026C"/>
<dbReference type="eggNOG" id="ENOG502S91C">
    <property type="taxonomic scope" value="Eukaryota"/>
</dbReference>
<dbReference type="HOGENOM" id="CLU_176405_0_0_1"/>
<dbReference type="InParanoid" id="Q750C9"/>
<dbReference type="OMA" id="YYVHLPF"/>
<dbReference type="OrthoDB" id="4065448at2759"/>
<dbReference type="Proteomes" id="UP000000591">
    <property type="component" value="Chromosome VII"/>
</dbReference>
<dbReference type="GO" id="GO:0005789">
    <property type="term" value="C:endoplasmic reticulum membrane"/>
    <property type="evidence" value="ECO:0007669"/>
    <property type="project" value="UniProtKB-SubCell"/>
</dbReference>
<dbReference type="GO" id="GO:0017059">
    <property type="term" value="C:serine palmitoyltransferase complex"/>
    <property type="evidence" value="ECO:0007669"/>
    <property type="project" value="EnsemblFungi"/>
</dbReference>
<dbReference type="GO" id="GO:0008047">
    <property type="term" value="F:enzyme activator activity"/>
    <property type="evidence" value="ECO:0007669"/>
    <property type="project" value="EnsemblFungi"/>
</dbReference>
<dbReference type="GO" id="GO:0006666">
    <property type="term" value="P:3-keto-sphinganine metabolic process"/>
    <property type="evidence" value="ECO:0007669"/>
    <property type="project" value="EnsemblFungi"/>
</dbReference>
<dbReference type="GO" id="GO:0090154">
    <property type="term" value="P:positive regulation of sphingolipid biosynthetic process"/>
    <property type="evidence" value="ECO:0007669"/>
    <property type="project" value="EnsemblFungi"/>
</dbReference>
<organism>
    <name type="scientific">Eremothecium gossypii (strain ATCC 10895 / CBS 109.51 / FGSC 9923 / NRRL Y-1056)</name>
    <name type="common">Yeast</name>
    <name type="synonym">Ashbya gossypii</name>
    <dbReference type="NCBI Taxonomy" id="284811"/>
    <lineage>
        <taxon>Eukaryota</taxon>
        <taxon>Fungi</taxon>
        <taxon>Dikarya</taxon>
        <taxon>Ascomycota</taxon>
        <taxon>Saccharomycotina</taxon>
        <taxon>Saccharomycetes</taxon>
        <taxon>Saccharomycetales</taxon>
        <taxon>Saccharomycetaceae</taxon>
        <taxon>Eremothecium</taxon>
    </lineage>
</organism>
<name>TSC3_EREGS</name>
<comment type="function">
    <text evidence="1">Stimulates the activity of serine palmitoyltransferase (SPT).</text>
</comment>
<comment type="subcellular location">
    <subcellularLocation>
        <location evidence="1">Endoplasmic reticulum membrane</location>
        <topology evidence="1">Single-pass membrane protein</topology>
    </subcellularLocation>
</comment>
<gene>
    <name type="primary">TSC3</name>
    <name type="ordered locus">AGR026C</name>
</gene>
<feature type="chain" id="PRO_0000076356" description="Serine palmitoyltransferase-regulating protein TSC3">
    <location>
        <begin position="1"/>
        <end position="107"/>
    </location>
</feature>
<feature type="transmembrane region" description="Helical" evidence="2">
    <location>
        <begin position="72"/>
        <end position="92"/>
    </location>
</feature>
<evidence type="ECO:0000250" key="1"/>
<evidence type="ECO:0000255" key="2"/>
<protein>
    <recommendedName>
        <fullName>Serine palmitoyltransferase-regulating protein TSC3</fullName>
    </recommendedName>
</protein>